<keyword id="KW-0106">Calcium</keyword>
<keyword id="KW-0903">Direct protein sequencing</keyword>
<keyword id="KW-1015">Disulfide bond</keyword>
<keyword id="KW-1199">Hemostasis impairing toxin</keyword>
<keyword id="KW-0378">Hydrolase</keyword>
<keyword id="KW-0442">Lipid degradation</keyword>
<keyword id="KW-0443">Lipid metabolism</keyword>
<keyword id="KW-0479">Metal-binding</keyword>
<keyword id="KW-1201">Platelet aggregation inhibiting toxin</keyword>
<keyword id="KW-0964">Secreted</keyword>
<keyword id="KW-0732">Signal</keyword>
<keyword id="KW-0800">Toxin</keyword>
<dbReference type="EC" id="3.1.1.4"/>
<dbReference type="EMBL" id="AF403134">
    <property type="protein sequence ID" value="AAO93137.1"/>
    <property type="molecule type" value="mRNA"/>
</dbReference>
<dbReference type="SMR" id="Q800C4"/>
<dbReference type="GO" id="GO:0005576">
    <property type="term" value="C:extracellular region"/>
    <property type="evidence" value="ECO:0007669"/>
    <property type="project" value="UniProtKB-SubCell"/>
</dbReference>
<dbReference type="GO" id="GO:0005509">
    <property type="term" value="F:calcium ion binding"/>
    <property type="evidence" value="ECO:0007669"/>
    <property type="project" value="InterPro"/>
</dbReference>
<dbReference type="GO" id="GO:0047498">
    <property type="term" value="F:calcium-dependent phospholipase A2 activity"/>
    <property type="evidence" value="ECO:0007669"/>
    <property type="project" value="TreeGrafter"/>
</dbReference>
<dbReference type="GO" id="GO:0005543">
    <property type="term" value="F:phospholipid binding"/>
    <property type="evidence" value="ECO:0007669"/>
    <property type="project" value="TreeGrafter"/>
</dbReference>
<dbReference type="GO" id="GO:0090729">
    <property type="term" value="F:toxin activity"/>
    <property type="evidence" value="ECO:0007669"/>
    <property type="project" value="UniProtKB-KW"/>
</dbReference>
<dbReference type="GO" id="GO:0050482">
    <property type="term" value="P:arachidonate secretion"/>
    <property type="evidence" value="ECO:0007669"/>
    <property type="project" value="InterPro"/>
</dbReference>
<dbReference type="GO" id="GO:0016042">
    <property type="term" value="P:lipid catabolic process"/>
    <property type="evidence" value="ECO:0007669"/>
    <property type="project" value="UniProtKB-KW"/>
</dbReference>
<dbReference type="GO" id="GO:0042130">
    <property type="term" value="P:negative regulation of T cell proliferation"/>
    <property type="evidence" value="ECO:0007669"/>
    <property type="project" value="TreeGrafter"/>
</dbReference>
<dbReference type="GO" id="GO:0006644">
    <property type="term" value="P:phospholipid metabolic process"/>
    <property type="evidence" value="ECO:0007669"/>
    <property type="project" value="InterPro"/>
</dbReference>
<dbReference type="CDD" id="cd00125">
    <property type="entry name" value="PLA2c"/>
    <property type="match status" value="1"/>
</dbReference>
<dbReference type="FunFam" id="1.20.90.10:FF:000001">
    <property type="entry name" value="Basic phospholipase A2 homolog"/>
    <property type="match status" value="1"/>
</dbReference>
<dbReference type="Gene3D" id="1.20.90.10">
    <property type="entry name" value="Phospholipase A2 domain"/>
    <property type="match status" value="1"/>
</dbReference>
<dbReference type="InterPro" id="IPR001211">
    <property type="entry name" value="PLipase_A2"/>
</dbReference>
<dbReference type="InterPro" id="IPR033112">
    <property type="entry name" value="PLipase_A2_Asp_AS"/>
</dbReference>
<dbReference type="InterPro" id="IPR016090">
    <property type="entry name" value="PLipase_A2_dom"/>
</dbReference>
<dbReference type="InterPro" id="IPR036444">
    <property type="entry name" value="PLipase_A2_dom_sf"/>
</dbReference>
<dbReference type="InterPro" id="IPR033113">
    <property type="entry name" value="PLipase_A2_His_AS"/>
</dbReference>
<dbReference type="PANTHER" id="PTHR11716">
    <property type="entry name" value="PHOSPHOLIPASE A2 FAMILY MEMBER"/>
    <property type="match status" value="1"/>
</dbReference>
<dbReference type="PANTHER" id="PTHR11716:SF9">
    <property type="entry name" value="PHOSPHOLIPASE A2, MEMBRANE ASSOCIATED"/>
    <property type="match status" value="1"/>
</dbReference>
<dbReference type="Pfam" id="PF00068">
    <property type="entry name" value="Phospholip_A2_1"/>
    <property type="match status" value="1"/>
</dbReference>
<dbReference type="PRINTS" id="PR00389">
    <property type="entry name" value="PHPHLIPASEA2"/>
</dbReference>
<dbReference type="SMART" id="SM00085">
    <property type="entry name" value="PA2c"/>
    <property type="match status" value="1"/>
</dbReference>
<dbReference type="SUPFAM" id="SSF48619">
    <property type="entry name" value="Phospholipase A2, PLA2"/>
    <property type="match status" value="1"/>
</dbReference>
<dbReference type="PROSITE" id="PS00119">
    <property type="entry name" value="PA2_ASP"/>
    <property type="match status" value="1"/>
</dbReference>
<dbReference type="PROSITE" id="PS00118">
    <property type="entry name" value="PA2_HIS"/>
    <property type="match status" value="1"/>
</dbReference>
<sequence length="138" mass="15233">MRTLWIVAVLLLGVEGSLVQFETLIMKIAGRSGLLWYSAYGCYCGWGGHGLPQDATDRCCFVHDCCYGKATDCNPKTVSYTYSEENGEIVCGGDNPCGTQICECDKAAAICFRDNIPSYSNKYWLFLPKNCRGDPEPC</sequence>
<proteinExistence type="evidence at protein level"/>
<accession>Q800C4</accession>
<name>PA2AA_CROVV</name>
<comment type="function">
    <text evidence="4">Snake venom phospholipase A2 (PLA2) that significantly inhibits ADP-induced platelet aggregation in platelet-rich plasma of human, rabbit and guinea pig. PLA2 catalyzes the calcium-dependent hydrolysis of the 2-acyl groups in 3-sn-phosphoglycerides.</text>
</comment>
<comment type="catalytic activity">
    <reaction evidence="2 3">
        <text>a 1,2-diacyl-sn-glycero-3-phosphocholine + H2O = a 1-acyl-sn-glycero-3-phosphocholine + a fatty acid + H(+)</text>
        <dbReference type="Rhea" id="RHEA:15801"/>
        <dbReference type="ChEBI" id="CHEBI:15377"/>
        <dbReference type="ChEBI" id="CHEBI:15378"/>
        <dbReference type="ChEBI" id="CHEBI:28868"/>
        <dbReference type="ChEBI" id="CHEBI:57643"/>
        <dbReference type="ChEBI" id="CHEBI:58168"/>
        <dbReference type="EC" id="3.1.1.4"/>
    </reaction>
</comment>
<comment type="cofactor">
    <cofactor evidence="4">
        <name>Ca(2+)</name>
        <dbReference type="ChEBI" id="CHEBI:29108"/>
    </cofactor>
</comment>
<comment type="subcellular location">
    <subcellularLocation>
        <location>Secreted</location>
    </subcellularLocation>
</comment>
<comment type="tissue specificity">
    <text>Expressed by the venom gland.</text>
</comment>
<comment type="mass spectrometry" mass="13467.0" method="Electrospray" evidence="4"/>
<comment type="miscellaneous">
    <text evidence="6">Negative results: has no edema-inducing activities.</text>
</comment>
<comment type="similarity">
    <text evidence="5">Belongs to the phospholipase A2 family. Group II subfamily. D49 sub-subfamily.</text>
</comment>
<protein>
    <recommendedName>
        <fullName>Acidic phospholipase A2 Cvv-E6a</fullName>
        <shortName>svPLA2</shortName>
        <ecNumber>3.1.1.4</ecNumber>
    </recommendedName>
    <alternativeName>
        <fullName>Phosphatidylcholine 2-acylhydrolase</fullName>
    </alternativeName>
</protein>
<evidence type="ECO:0000250" key="1"/>
<evidence type="ECO:0000255" key="2">
    <source>
        <dbReference type="PROSITE-ProRule" id="PRU10035"/>
    </source>
</evidence>
<evidence type="ECO:0000255" key="3">
    <source>
        <dbReference type="PROSITE-ProRule" id="PRU10036"/>
    </source>
</evidence>
<evidence type="ECO:0000269" key="4">
    <source>
    </source>
</evidence>
<evidence type="ECO:0000305" key="5"/>
<evidence type="ECO:0000305" key="6">
    <source>
    </source>
</evidence>
<reference key="1">
    <citation type="journal article" date="2003" name="Arch. Biochem. Biophys.">
        <title>Geographic variations, cloning, and functional analyses of the venom acidic phospholipases A2 of Crotalus viridis viridis.</title>
        <authorList>
            <person name="Tsai I.-H."/>
            <person name="Wang Y.-M."/>
            <person name="Chen Y.-H."/>
            <person name="Tu A.T."/>
        </authorList>
    </citation>
    <scope>NUCLEOTIDE SEQUENCE [MRNA]</scope>
    <scope>PROTEIN SEQUENCE OF 17-39</scope>
    <scope>FUNCTION</scope>
    <scope>COFACTOR</scope>
    <scope>MASS SPECTROMETRY</scope>
    <source>
        <strain>Colorado</strain>
        <strain>New Mexico</strain>
        <strain>South Dakota</strain>
        <strain>Southeastern Arizona</strain>
        <strain>Texas</strain>
        <strain>Western Oklahoma</strain>
        <strain>Wyoming</strain>
        <tissue>Venom</tissue>
        <tissue>Venom gland</tissue>
    </source>
</reference>
<feature type="signal peptide" evidence="4">
    <location>
        <begin position="1"/>
        <end position="16"/>
    </location>
</feature>
<feature type="chain" id="PRO_0000418553" description="Acidic phospholipase A2 Cvv-E6a">
    <location>
        <begin position="17"/>
        <end position="138"/>
    </location>
</feature>
<feature type="active site" evidence="1">
    <location>
        <position position="63"/>
    </location>
</feature>
<feature type="active site" evidence="1">
    <location>
        <position position="105"/>
    </location>
</feature>
<feature type="binding site" evidence="1">
    <location>
        <position position="43"/>
    </location>
    <ligand>
        <name>Ca(2+)</name>
        <dbReference type="ChEBI" id="CHEBI:29108"/>
    </ligand>
</feature>
<feature type="binding site" evidence="1">
    <location>
        <position position="45"/>
    </location>
    <ligand>
        <name>Ca(2+)</name>
        <dbReference type="ChEBI" id="CHEBI:29108"/>
    </ligand>
</feature>
<feature type="binding site" evidence="1">
    <location>
        <position position="47"/>
    </location>
    <ligand>
        <name>Ca(2+)</name>
        <dbReference type="ChEBI" id="CHEBI:29108"/>
    </ligand>
</feature>
<feature type="binding site" evidence="1">
    <location>
        <position position="64"/>
    </location>
    <ligand>
        <name>Ca(2+)</name>
        <dbReference type="ChEBI" id="CHEBI:29108"/>
    </ligand>
</feature>
<feature type="disulfide bond" evidence="1">
    <location>
        <begin position="42"/>
        <end position="131"/>
    </location>
</feature>
<feature type="disulfide bond" evidence="1">
    <location>
        <begin position="44"/>
        <end position="60"/>
    </location>
</feature>
<feature type="disulfide bond" evidence="1">
    <location>
        <begin position="59"/>
        <end position="111"/>
    </location>
</feature>
<feature type="disulfide bond" evidence="1">
    <location>
        <begin position="65"/>
        <end position="138"/>
    </location>
</feature>
<feature type="disulfide bond" evidence="1">
    <location>
        <begin position="66"/>
        <end position="104"/>
    </location>
</feature>
<feature type="disulfide bond" evidence="1">
    <location>
        <begin position="73"/>
        <end position="97"/>
    </location>
</feature>
<feature type="disulfide bond" evidence="1">
    <location>
        <begin position="91"/>
        <end position="102"/>
    </location>
</feature>
<organism>
    <name type="scientific">Crotalus viridis viridis</name>
    <name type="common">Prairie rattlesnake</name>
    <dbReference type="NCBI Taxonomy" id="8742"/>
    <lineage>
        <taxon>Eukaryota</taxon>
        <taxon>Metazoa</taxon>
        <taxon>Chordata</taxon>
        <taxon>Craniata</taxon>
        <taxon>Vertebrata</taxon>
        <taxon>Euteleostomi</taxon>
        <taxon>Lepidosauria</taxon>
        <taxon>Squamata</taxon>
        <taxon>Bifurcata</taxon>
        <taxon>Unidentata</taxon>
        <taxon>Episquamata</taxon>
        <taxon>Toxicofera</taxon>
        <taxon>Serpentes</taxon>
        <taxon>Colubroidea</taxon>
        <taxon>Viperidae</taxon>
        <taxon>Crotalinae</taxon>
        <taxon>Crotalus</taxon>
    </lineage>
</organism>